<keyword id="KW-0597">Phosphoprotein</keyword>
<organism>
    <name type="scientific">Influenza A virus (strain A/Chicken/Hong Kong/YU562/2001 H5N1 genotype B)</name>
    <dbReference type="NCBI Taxonomy" id="196426"/>
    <lineage>
        <taxon>Viruses</taxon>
        <taxon>Riboviria</taxon>
        <taxon>Orthornavirae</taxon>
        <taxon>Negarnaviricota</taxon>
        <taxon>Polyploviricotina</taxon>
        <taxon>Insthoviricetes</taxon>
        <taxon>Articulavirales</taxon>
        <taxon>Orthomyxoviridae</taxon>
        <taxon>Alphainfluenzavirus</taxon>
        <taxon>Alphainfluenzavirus influenzae</taxon>
        <taxon>Influenza A virus</taxon>
    </lineage>
</organism>
<evidence type="ECO:0000250" key="1"/>
<evidence type="ECO:0000305" key="2"/>
<proteinExistence type="inferred from homology"/>
<feature type="chain" id="PRO_0000311130" description="Polymerase acidic protein">
    <location>
        <begin position="1" status="less than"/>
        <end position="216"/>
    </location>
</feature>
<feature type="non-terminal residue">
    <location>
        <position position="1"/>
    </location>
</feature>
<organismHost>
    <name type="scientific">Aves</name>
    <dbReference type="NCBI Taxonomy" id="8782"/>
</organismHost>
<organismHost>
    <name type="scientific">Felis catus</name>
    <name type="common">Cat</name>
    <name type="synonym">Felis silvestris catus</name>
    <dbReference type="NCBI Taxonomy" id="9685"/>
</organismHost>
<organismHost>
    <name type="scientific">Homo sapiens</name>
    <name type="common">Human</name>
    <dbReference type="NCBI Taxonomy" id="9606"/>
</organismHost>
<organismHost>
    <name type="scientific">Panthera pardus</name>
    <name type="common">Leopard</name>
    <name type="synonym">Felis pardus</name>
    <dbReference type="NCBI Taxonomy" id="9691"/>
</organismHost>
<organismHost>
    <name type="scientific">Panthera tigris</name>
    <name type="common">Tiger</name>
    <dbReference type="NCBI Taxonomy" id="9694"/>
</organismHost>
<organismHost>
    <name type="scientific">Sus scrofa</name>
    <name type="common">Pig</name>
    <dbReference type="NCBI Taxonomy" id="9823"/>
</organismHost>
<dbReference type="EMBL" id="AF509196">
    <property type="protein sequence ID" value="AAO53039.1"/>
    <property type="molecule type" value="Genomic_DNA"/>
</dbReference>
<dbReference type="SMR" id="Q809K1"/>
<dbReference type="MEROPS" id="S62.001"/>
<dbReference type="GO" id="GO:0003723">
    <property type="term" value="F:RNA binding"/>
    <property type="evidence" value="ECO:0007669"/>
    <property type="project" value="InterPro"/>
</dbReference>
<dbReference type="GO" id="GO:0039694">
    <property type="term" value="P:viral RNA genome replication"/>
    <property type="evidence" value="ECO:0007669"/>
    <property type="project" value="InterPro"/>
</dbReference>
<dbReference type="InterPro" id="IPR001009">
    <property type="entry name" value="PA/PA-X"/>
</dbReference>
<dbReference type="Pfam" id="PF00603">
    <property type="entry name" value="Flu_PA"/>
    <property type="match status" value="1"/>
</dbReference>
<gene>
    <name type="primary">PA</name>
</gene>
<sequence length="216" mass="24738">DDFQLIPMISKCRTKEGRRKTNLYGFIIKGRSHLRNDTDVVNFVSMEFSLTDPRLEPHKWEKYCVLEIGDMLLRTAVGQVSRPMFLYVRTNGTSKIKMKWGMEMRRCLLQSLQQIESMIEAESSVKEKDMTKEFFENKSETWPIGESPKGVEEGSIGKVCRTLLAKSVFNSLYASPQLEGFSAESRKLLLIAQALRDNLEPGPSILEGYMKQLRSA</sequence>
<name>PA_I01A1</name>
<accession>Q809K1</accession>
<comment type="function">
    <text evidence="1">Implicated in endonuclease cleavage of capped RNA primers. Displays an elongation factor activity in viral RNA synthesis. Dispensable for viral transcription, but not replication (By similarity).</text>
</comment>
<comment type="subunit">
    <text evidence="1">Influenza RNA polymerase is composed of three subunits: PB1, PB2 and PA.</text>
</comment>
<comment type="PTM">
    <text evidence="1">Phosphorylated on serines and threonines by host kinases, including human casein kinase II.</text>
</comment>
<comment type="similarity">
    <text evidence="2">Belongs to the influenza viruses PA family.</text>
</comment>
<protein>
    <recommendedName>
        <fullName>Polymerase acidic protein</fullName>
    </recommendedName>
    <alternativeName>
        <fullName>RNA-directed RNA polymerase subunit P2</fullName>
    </alternativeName>
</protein>
<reference key="1">
    <citation type="journal article" date="2002" name="Proc. Natl. Acad. Sci. U.S.A.">
        <title>Emergence of multiple genotypes of H5N1 avian influenza viruses in Hong Kong SAR.</title>
        <authorList>
            <person name="Guan Y."/>
            <person name="Peiris J.S.M."/>
            <person name="Lipatov A.S."/>
            <person name="Ellis T.M."/>
            <person name="Dyrting K.C."/>
            <person name="Krauss S."/>
            <person name="Zhang L.J."/>
            <person name="Webster R.G."/>
            <person name="Shortridge K.F."/>
        </authorList>
    </citation>
    <scope>NUCLEOTIDE SEQUENCE [GENOMIC RNA]</scope>
</reference>